<keyword id="KW-0067">ATP-binding</keyword>
<keyword id="KW-0963">Cytoplasm</keyword>
<keyword id="KW-0418">Kinase</keyword>
<keyword id="KW-0547">Nucleotide-binding</keyword>
<keyword id="KW-1185">Reference proteome</keyword>
<keyword id="KW-0808">Transferase</keyword>
<evidence type="ECO:0000255" key="1">
    <source>
        <dbReference type="HAMAP-Rule" id="MF_00328"/>
    </source>
</evidence>
<evidence type="ECO:0000256" key="2">
    <source>
        <dbReference type="SAM" id="MobiDB-lite"/>
    </source>
</evidence>
<comment type="function">
    <text evidence="1">Essential for recycling GMP and indirectly, cGMP.</text>
</comment>
<comment type="catalytic activity">
    <reaction evidence="1">
        <text>GMP + ATP = GDP + ADP</text>
        <dbReference type="Rhea" id="RHEA:20780"/>
        <dbReference type="ChEBI" id="CHEBI:30616"/>
        <dbReference type="ChEBI" id="CHEBI:58115"/>
        <dbReference type="ChEBI" id="CHEBI:58189"/>
        <dbReference type="ChEBI" id="CHEBI:456216"/>
        <dbReference type="EC" id="2.7.4.8"/>
    </reaction>
</comment>
<comment type="subcellular location">
    <subcellularLocation>
        <location evidence="1">Cytoplasm</location>
    </subcellularLocation>
</comment>
<comment type="similarity">
    <text evidence="1">Belongs to the guanylate kinase family.</text>
</comment>
<dbReference type="EC" id="2.7.4.8" evidence="1"/>
<dbReference type="EMBL" id="CP000447">
    <property type="protein sequence ID" value="ABI70228.1"/>
    <property type="molecule type" value="Genomic_DNA"/>
</dbReference>
<dbReference type="RefSeq" id="WP_011635855.1">
    <property type="nucleotide sequence ID" value="NC_008345.1"/>
</dbReference>
<dbReference type="SMR" id="Q088T7"/>
<dbReference type="STRING" id="318167.Sfri_0365"/>
<dbReference type="KEGG" id="sfr:Sfri_0365"/>
<dbReference type="eggNOG" id="COG0194">
    <property type="taxonomic scope" value="Bacteria"/>
</dbReference>
<dbReference type="HOGENOM" id="CLU_001715_1_0_6"/>
<dbReference type="OrthoDB" id="9808150at2"/>
<dbReference type="Proteomes" id="UP000000684">
    <property type="component" value="Chromosome"/>
</dbReference>
<dbReference type="GO" id="GO:0005829">
    <property type="term" value="C:cytosol"/>
    <property type="evidence" value="ECO:0007669"/>
    <property type="project" value="TreeGrafter"/>
</dbReference>
<dbReference type="GO" id="GO:0005524">
    <property type="term" value="F:ATP binding"/>
    <property type="evidence" value="ECO:0007669"/>
    <property type="project" value="UniProtKB-UniRule"/>
</dbReference>
<dbReference type="GO" id="GO:0004385">
    <property type="term" value="F:guanylate kinase activity"/>
    <property type="evidence" value="ECO:0007669"/>
    <property type="project" value="UniProtKB-UniRule"/>
</dbReference>
<dbReference type="CDD" id="cd00071">
    <property type="entry name" value="GMPK"/>
    <property type="match status" value="1"/>
</dbReference>
<dbReference type="FunFam" id="3.40.50.300:FF:000084">
    <property type="entry name" value="Guanylate kinase"/>
    <property type="match status" value="1"/>
</dbReference>
<dbReference type="FunFam" id="3.30.63.10:FF:000002">
    <property type="entry name" value="Guanylate kinase 1"/>
    <property type="match status" value="1"/>
</dbReference>
<dbReference type="Gene3D" id="3.30.63.10">
    <property type="entry name" value="Guanylate Kinase phosphate binding domain"/>
    <property type="match status" value="1"/>
</dbReference>
<dbReference type="Gene3D" id="3.40.50.300">
    <property type="entry name" value="P-loop containing nucleotide triphosphate hydrolases"/>
    <property type="match status" value="1"/>
</dbReference>
<dbReference type="HAMAP" id="MF_00328">
    <property type="entry name" value="Guanylate_kinase"/>
    <property type="match status" value="1"/>
</dbReference>
<dbReference type="InterPro" id="IPR008145">
    <property type="entry name" value="GK/Ca_channel_bsu"/>
</dbReference>
<dbReference type="InterPro" id="IPR008144">
    <property type="entry name" value="Guanylate_kin-like_dom"/>
</dbReference>
<dbReference type="InterPro" id="IPR017665">
    <property type="entry name" value="Guanylate_kinase"/>
</dbReference>
<dbReference type="InterPro" id="IPR020590">
    <property type="entry name" value="Guanylate_kinase_CS"/>
</dbReference>
<dbReference type="InterPro" id="IPR027417">
    <property type="entry name" value="P-loop_NTPase"/>
</dbReference>
<dbReference type="NCBIfam" id="TIGR03263">
    <property type="entry name" value="guanyl_kin"/>
    <property type="match status" value="1"/>
</dbReference>
<dbReference type="PANTHER" id="PTHR23117:SF13">
    <property type="entry name" value="GUANYLATE KINASE"/>
    <property type="match status" value="1"/>
</dbReference>
<dbReference type="PANTHER" id="PTHR23117">
    <property type="entry name" value="GUANYLATE KINASE-RELATED"/>
    <property type="match status" value="1"/>
</dbReference>
<dbReference type="Pfam" id="PF00625">
    <property type="entry name" value="Guanylate_kin"/>
    <property type="match status" value="1"/>
</dbReference>
<dbReference type="SMART" id="SM00072">
    <property type="entry name" value="GuKc"/>
    <property type="match status" value="1"/>
</dbReference>
<dbReference type="SUPFAM" id="SSF52540">
    <property type="entry name" value="P-loop containing nucleoside triphosphate hydrolases"/>
    <property type="match status" value="1"/>
</dbReference>
<dbReference type="PROSITE" id="PS00856">
    <property type="entry name" value="GUANYLATE_KINASE_1"/>
    <property type="match status" value="1"/>
</dbReference>
<dbReference type="PROSITE" id="PS50052">
    <property type="entry name" value="GUANYLATE_KINASE_2"/>
    <property type="match status" value="1"/>
</dbReference>
<sequence>MSTRGNLFIVSAPSGAGKSSLISTLLKDKPSDKQVSVSHTTRKPRPGEVDGQHYHFITVEQFKALIAQNAFIEWAEVFGNFYGTSKLVIEQTLDKGIDVFLDIDWQGAEQVKKLMETAIGVFILPPSKAELERRLTGRGQDSQQVIDSRMAQAVSEMSHYAQYEFIIVNDDFDNALADLSAIIRSQRLTCASQQHAQNDMIVDLLAD</sequence>
<proteinExistence type="inferred from homology"/>
<feature type="chain" id="PRO_0000266397" description="Guanylate kinase">
    <location>
        <begin position="1"/>
        <end position="207"/>
    </location>
</feature>
<feature type="domain" description="Guanylate kinase-like" evidence="1">
    <location>
        <begin position="5"/>
        <end position="184"/>
    </location>
</feature>
<feature type="region of interest" description="Disordered" evidence="2">
    <location>
        <begin position="30"/>
        <end position="49"/>
    </location>
</feature>
<feature type="binding site" evidence="1">
    <location>
        <begin position="12"/>
        <end position="19"/>
    </location>
    <ligand>
        <name>ATP</name>
        <dbReference type="ChEBI" id="CHEBI:30616"/>
    </ligand>
</feature>
<accession>Q088T7</accession>
<reference key="1">
    <citation type="submission" date="2006-08" db="EMBL/GenBank/DDBJ databases">
        <title>Complete sequence of Shewanella frigidimarina NCIMB 400.</title>
        <authorList>
            <consortium name="US DOE Joint Genome Institute"/>
            <person name="Copeland A."/>
            <person name="Lucas S."/>
            <person name="Lapidus A."/>
            <person name="Barry K."/>
            <person name="Detter J.C."/>
            <person name="Glavina del Rio T."/>
            <person name="Hammon N."/>
            <person name="Israni S."/>
            <person name="Dalin E."/>
            <person name="Tice H."/>
            <person name="Pitluck S."/>
            <person name="Fredrickson J.K."/>
            <person name="Kolker E."/>
            <person name="McCuel L.A."/>
            <person name="DiChristina T."/>
            <person name="Nealson K.H."/>
            <person name="Newman D."/>
            <person name="Tiedje J.M."/>
            <person name="Zhou J."/>
            <person name="Romine M.F."/>
            <person name="Culley D.E."/>
            <person name="Serres M."/>
            <person name="Chertkov O."/>
            <person name="Brettin T."/>
            <person name="Bruce D."/>
            <person name="Han C."/>
            <person name="Tapia R."/>
            <person name="Gilna P."/>
            <person name="Schmutz J."/>
            <person name="Larimer F."/>
            <person name="Land M."/>
            <person name="Hauser L."/>
            <person name="Kyrpides N."/>
            <person name="Mikhailova N."/>
            <person name="Richardson P."/>
        </authorList>
    </citation>
    <scope>NUCLEOTIDE SEQUENCE [LARGE SCALE GENOMIC DNA]</scope>
    <source>
        <strain>NCIMB 400</strain>
    </source>
</reference>
<protein>
    <recommendedName>
        <fullName evidence="1">Guanylate kinase</fullName>
        <ecNumber evidence="1">2.7.4.8</ecNumber>
    </recommendedName>
    <alternativeName>
        <fullName evidence="1">GMP kinase</fullName>
    </alternativeName>
</protein>
<organism>
    <name type="scientific">Shewanella frigidimarina (strain NCIMB 400)</name>
    <dbReference type="NCBI Taxonomy" id="318167"/>
    <lineage>
        <taxon>Bacteria</taxon>
        <taxon>Pseudomonadati</taxon>
        <taxon>Pseudomonadota</taxon>
        <taxon>Gammaproteobacteria</taxon>
        <taxon>Alteromonadales</taxon>
        <taxon>Shewanellaceae</taxon>
        <taxon>Shewanella</taxon>
    </lineage>
</organism>
<name>KGUA_SHEFN</name>
<gene>
    <name evidence="1" type="primary">gmk</name>
    <name type="ordered locus">Sfri_0365</name>
</gene>